<evidence type="ECO:0000255" key="1">
    <source>
        <dbReference type="HAMAP-Rule" id="MF_00374"/>
    </source>
</evidence>
<evidence type="ECO:0000305" key="2"/>
<gene>
    <name evidence="1" type="primary">rpmC</name>
    <name type="ordered locus">SbBS512_E3697</name>
</gene>
<keyword id="KW-1185">Reference proteome</keyword>
<keyword id="KW-0687">Ribonucleoprotein</keyword>
<keyword id="KW-0689">Ribosomal protein</keyword>
<name>RL29_SHIB3</name>
<proteinExistence type="inferred from homology"/>
<organism>
    <name type="scientific">Shigella boydii serotype 18 (strain CDC 3083-94 / BS512)</name>
    <dbReference type="NCBI Taxonomy" id="344609"/>
    <lineage>
        <taxon>Bacteria</taxon>
        <taxon>Pseudomonadati</taxon>
        <taxon>Pseudomonadota</taxon>
        <taxon>Gammaproteobacteria</taxon>
        <taxon>Enterobacterales</taxon>
        <taxon>Enterobacteriaceae</taxon>
        <taxon>Shigella</taxon>
    </lineage>
</organism>
<feature type="chain" id="PRO_1000121818" description="Large ribosomal subunit protein uL29">
    <location>
        <begin position="1"/>
        <end position="63"/>
    </location>
</feature>
<sequence length="63" mass="7273">MKAKELREKSVEELNTELLNLLREQFNLRMQAASGQLQQSHLLKQVRRDVARVKTLLNEKAGA</sequence>
<protein>
    <recommendedName>
        <fullName evidence="1">Large ribosomal subunit protein uL29</fullName>
    </recommendedName>
    <alternativeName>
        <fullName evidence="2">50S ribosomal protein L29</fullName>
    </alternativeName>
</protein>
<dbReference type="EMBL" id="CP001063">
    <property type="protein sequence ID" value="ACD07765.1"/>
    <property type="molecule type" value="Genomic_DNA"/>
</dbReference>
<dbReference type="RefSeq" id="WP_000644741.1">
    <property type="nucleotide sequence ID" value="NC_010658.1"/>
</dbReference>
<dbReference type="SMR" id="B2U2T0"/>
<dbReference type="STRING" id="344609.SbBS512_E3697"/>
<dbReference type="GeneID" id="93778675"/>
<dbReference type="KEGG" id="sbc:SbBS512_E3697"/>
<dbReference type="HOGENOM" id="CLU_158491_1_2_6"/>
<dbReference type="Proteomes" id="UP000001030">
    <property type="component" value="Chromosome"/>
</dbReference>
<dbReference type="GO" id="GO:0022625">
    <property type="term" value="C:cytosolic large ribosomal subunit"/>
    <property type="evidence" value="ECO:0007669"/>
    <property type="project" value="TreeGrafter"/>
</dbReference>
<dbReference type="GO" id="GO:0003735">
    <property type="term" value="F:structural constituent of ribosome"/>
    <property type="evidence" value="ECO:0007669"/>
    <property type="project" value="InterPro"/>
</dbReference>
<dbReference type="GO" id="GO:0006412">
    <property type="term" value="P:translation"/>
    <property type="evidence" value="ECO:0007669"/>
    <property type="project" value="UniProtKB-UniRule"/>
</dbReference>
<dbReference type="CDD" id="cd00427">
    <property type="entry name" value="Ribosomal_L29_HIP"/>
    <property type="match status" value="1"/>
</dbReference>
<dbReference type="Gene3D" id="6.10.140.1970">
    <property type="match status" value="1"/>
</dbReference>
<dbReference type="HAMAP" id="MF_00374">
    <property type="entry name" value="Ribosomal_uL29"/>
    <property type="match status" value="1"/>
</dbReference>
<dbReference type="InterPro" id="IPR050063">
    <property type="entry name" value="Ribosomal_protein_uL29"/>
</dbReference>
<dbReference type="InterPro" id="IPR001854">
    <property type="entry name" value="Ribosomal_uL29"/>
</dbReference>
<dbReference type="InterPro" id="IPR018254">
    <property type="entry name" value="Ribosomal_uL29_CS"/>
</dbReference>
<dbReference type="InterPro" id="IPR036049">
    <property type="entry name" value="Ribosomal_uL29_sf"/>
</dbReference>
<dbReference type="NCBIfam" id="TIGR00012">
    <property type="entry name" value="L29"/>
    <property type="match status" value="1"/>
</dbReference>
<dbReference type="PANTHER" id="PTHR10916">
    <property type="entry name" value="60S RIBOSOMAL PROTEIN L35/50S RIBOSOMAL PROTEIN L29"/>
    <property type="match status" value="1"/>
</dbReference>
<dbReference type="PANTHER" id="PTHR10916:SF0">
    <property type="entry name" value="LARGE RIBOSOMAL SUBUNIT PROTEIN UL29C"/>
    <property type="match status" value="1"/>
</dbReference>
<dbReference type="Pfam" id="PF00831">
    <property type="entry name" value="Ribosomal_L29"/>
    <property type="match status" value="1"/>
</dbReference>
<dbReference type="SUPFAM" id="SSF46561">
    <property type="entry name" value="Ribosomal protein L29 (L29p)"/>
    <property type="match status" value="1"/>
</dbReference>
<dbReference type="PROSITE" id="PS00579">
    <property type="entry name" value="RIBOSOMAL_L29"/>
    <property type="match status" value="1"/>
</dbReference>
<comment type="similarity">
    <text evidence="1">Belongs to the universal ribosomal protein uL29 family.</text>
</comment>
<reference key="1">
    <citation type="submission" date="2008-05" db="EMBL/GenBank/DDBJ databases">
        <title>Complete sequence of Shigella boydii serotype 18 strain BS512.</title>
        <authorList>
            <person name="Rasko D.A."/>
            <person name="Rosovitz M."/>
            <person name="Maurelli A.T."/>
            <person name="Myers G."/>
            <person name="Seshadri R."/>
            <person name="Cer R."/>
            <person name="Jiang L."/>
            <person name="Ravel J."/>
            <person name="Sebastian Y."/>
        </authorList>
    </citation>
    <scope>NUCLEOTIDE SEQUENCE [LARGE SCALE GENOMIC DNA]</scope>
    <source>
        <strain>CDC 3083-94 / BS512</strain>
    </source>
</reference>
<accession>B2U2T0</accession>